<name>RP35_VAR67</name>
<dbReference type="EC" id="2.7.7.6"/>
<dbReference type="EMBL" id="X69198">
    <property type="protein sequence ID" value="CAA49077.1"/>
    <property type="molecule type" value="Genomic_DNA"/>
</dbReference>
<dbReference type="EMBL" id="X67115">
    <property type="protein sequence ID" value="CAA47503.1"/>
    <property type="molecule type" value="Genomic_DNA"/>
</dbReference>
<dbReference type="PIR" id="F36851">
    <property type="entry name" value="F36851"/>
</dbReference>
<dbReference type="RefSeq" id="NP_042180.1">
    <property type="nucleotide sequence ID" value="NC_001611.1"/>
</dbReference>
<dbReference type="SMR" id="P33812"/>
<dbReference type="GeneID" id="1486510"/>
<dbReference type="KEGG" id="vg:1486510"/>
<dbReference type="Proteomes" id="UP000002060">
    <property type="component" value="Segment"/>
</dbReference>
<dbReference type="GO" id="GO:0000428">
    <property type="term" value="C:DNA-directed RNA polymerase complex"/>
    <property type="evidence" value="ECO:0007669"/>
    <property type="project" value="UniProtKB-KW"/>
</dbReference>
<dbReference type="GO" id="GO:0044423">
    <property type="term" value="C:virion component"/>
    <property type="evidence" value="ECO:0007669"/>
    <property type="project" value="UniProtKB-KW"/>
</dbReference>
<dbReference type="GO" id="GO:0003677">
    <property type="term" value="F:DNA binding"/>
    <property type="evidence" value="ECO:0007669"/>
    <property type="project" value="InterPro"/>
</dbReference>
<dbReference type="GO" id="GO:0003899">
    <property type="term" value="F:DNA-directed RNA polymerase activity"/>
    <property type="evidence" value="ECO:0007669"/>
    <property type="project" value="UniProtKB-EC"/>
</dbReference>
<dbReference type="GO" id="GO:0019083">
    <property type="term" value="P:viral transcription"/>
    <property type="evidence" value="ECO:0007669"/>
    <property type="project" value="InterPro"/>
</dbReference>
<dbReference type="InterPro" id="IPR005059">
    <property type="entry name" value="DNA-dir_RNA_pol_35kDa_poxviral"/>
</dbReference>
<dbReference type="Pfam" id="PF03396">
    <property type="entry name" value="Pox_RNA_pol_35"/>
    <property type="match status" value="1"/>
</dbReference>
<dbReference type="PIRSF" id="PIRSF000746">
    <property type="entry name" value="Rpo35"/>
    <property type="match status" value="1"/>
</dbReference>
<keyword id="KW-0240">DNA-directed RNA polymerase</keyword>
<keyword id="KW-0548">Nucleotidyltransferase</keyword>
<keyword id="KW-0597">Phosphoprotein</keyword>
<keyword id="KW-1185">Reference proteome</keyword>
<keyword id="KW-0804">Transcription</keyword>
<keyword id="KW-0808">Transferase</keyword>
<keyword id="KW-0946">Virion</keyword>
<organism>
    <name type="scientific">Variola virus (isolate Human/India/Ind3/1967)</name>
    <name type="common">VARV</name>
    <name type="synonym">Smallpox virus</name>
    <dbReference type="NCBI Taxonomy" id="587200"/>
    <lineage>
        <taxon>Viruses</taxon>
        <taxon>Varidnaviria</taxon>
        <taxon>Bamfordvirae</taxon>
        <taxon>Nucleocytoviricota</taxon>
        <taxon>Pokkesviricetes</taxon>
        <taxon>Chitovirales</taxon>
        <taxon>Poxviridae</taxon>
        <taxon>Chordopoxvirinae</taxon>
        <taxon>Orthopoxvirus</taxon>
        <taxon>Variola virus</taxon>
    </lineage>
</organism>
<feature type="chain" id="PRO_0000099135" description="DNA-directed RNA polymerase 35 kDa subunit">
    <location>
        <begin position="1"/>
        <end position="305"/>
    </location>
</feature>
<sequence length="305" mass="35411">MRHPREENSIVVELEPSLATFIKQGFNNLVKWPLLNIGIVLSNTSTAINEEWLTVVEHIPTMKIFYKHIHKILTREMGFLVYLKRSQSERDNYITLYDFDYYIIDKDTNSVTMVDKPTELKETLLHVFQEYRLKSSQTIELIAFSSGTVINEDIVSKLTFLDVEVFNREYNNVKTIMNPDFVSRSPFIVISPMGKLTFFVEVYSWFDFKSCFKDIIDFLEGALIANIHNHMIKVGDCDETVSSYNPESGILFVNDLMTMNIVNFFGCNSRLESYHRFDITKVDVELFIKALSDACKKILLASNRL</sequence>
<protein>
    <recommendedName>
        <fullName>DNA-directed RNA polymerase 35 kDa subunit</fullName>
        <ecNumber>2.7.7.6</ecNumber>
    </recommendedName>
</protein>
<proteinExistence type="inferred from homology"/>
<comment type="function">
    <text evidence="1">Part of the DNA-dependent RNA polymerase which catalyzes the transcription of viral DNA into RNA using the four ribonucleoside triphosphates as substrates. Responsible for the transcription of early, intermediate and late genes. DNA-dependent RNA polymerase associates with the early transcription factor (ETF), itself composed of D6 and A7, thereby allowing the early genes transcription. Late transcription, and probably also intermediate transcription, require newly synthesized RNA polymerase.</text>
</comment>
<comment type="catalytic activity">
    <reaction evidence="1">
        <text>RNA(n) + a ribonucleoside 5'-triphosphate = RNA(n+1) + diphosphate</text>
        <dbReference type="Rhea" id="RHEA:21248"/>
        <dbReference type="Rhea" id="RHEA-COMP:14527"/>
        <dbReference type="Rhea" id="RHEA-COMP:17342"/>
        <dbReference type="ChEBI" id="CHEBI:33019"/>
        <dbReference type="ChEBI" id="CHEBI:61557"/>
        <dbReference type="ChEBI" id="CHEBI:140395"/>
        <dbReference type="EC" id="2.7.7.6"/>
    </reaction>
</comment>
<comment type="subunit">
    <text evidence="1">The DNA-dependent RNA polymerase used for intermediate and late genes expression consists of eight subunits 147 kDa, 133 kDa, 35 kDa, 30 kDa, 22 kDa, 19 kDa, 18 kDa and 7 kDa totalling more than 500 kDa in mass. The same holoenzyme, with the addition of the transcription-specificity factor RAP94, is used for early gene expression.</text>
</comment>
<comment type="subcellular location">
    <subcellularLocation>
        <location evidence="1">Virion</location>
    </subcellularLocation>
    <text evidence="1">All the enzymes and other proteins required to synthesize early mRNAs are packaged within the virion core along with the DNA genome. This is necessary because viral early mRNAs are synthesized within minutes after virus entry into the cell and are extruded through pores in the core particle.</text>
</comment>
<comment type="similarity">
    <text evidence="2">Belongs to the poxviridae DNA-directed RNA polymerase 35 kDa subunit family.</text>
</comment>
<gene>
    <name type="primary">OPG156</name>
    <name type="synonym">RPO35</name>
    <name type="ORF">A29L</name>
    <name type="ORF">A32L</name>
</gene>
<accession>P33812</accession>
<organismHost>
    <name type="scientific">Homo sapiens</name>
    <name type="common">Human</name>
    <dbReference type="NCBI Taxonomy" id="9606"/>
</organismHost>
<reference key="1">
    <citation type="journal article" date="1991" name="Dokl. Akad. Nauk SSSR">
        <title>Creation of a clone library of fragments from the natural variola virus and study of the structural and functional organization of viral genes from a circle of hosts.</title>
        <authorList>
            <person name="Shchelkunov S.N."/>
            <person name="Marennikova S.S."/>
            <person name="Totmenin A.V."/>
            <person name="Blinov V.M."/>
            <person name="Chizhikov V.E."/>
            <person name="Gutorov V.V."/>
            <person name="Safronov P.F."/>
            <person name="Pozdnyakov S.G."/>
            <person name="Shelukhina E.M."/>
            <person name="Gashnikov P.V."/>
            <person name="Anjaparidze O.G."/>
            <person name="Sandakhchiev L.S."/>
        </authorList>
    </citation>
    <scope>NUCLEOTIDE SEQUENCE [GENOMIC DNA]</scope>
</reference>
<reference key="2">
    <citation type="journal article" date="1993" name="FEBS Lett.">
        <title>Genes of variola and vaccinia viruses necessary to overcome the host protective mechanisms.</title>
        <authorList>
            <person name="Shchelkunov S.N."/>
            <person name="Blinov V.M."/>
            <person name="Sandakhchiev L.S."/>
        </authorList>
    </citation>
    <scope>NUCLEOTIDE SEQUENCE [LARGE SCALE GENOMIC DNA]</scope>
</reference>
<evidence type="ECO:0000250" key="1">
    <source>
        <dbReference type="UniProtKB" id="P24757"/>
    </source>
</evidence>
<evidence type="ECO:0000305" key="2"/>